<protein>
    <recommendedName>
        <fullName evidence="1">Fe/S biogenesis protein NfuA</fullName>
    </recommendedName>
</protein>
<dbReference type="EMBL" id="FM200053">
    <property type="protein sequence ID" value="CAR61406.1"/>
    <property type="molecule type" value="Genomic_DNA"/>
</dbReference>
<dbReference type="RefSeq" id="WP_000619384.1">
    <property type="nucleotide sequence ID" value="NC_011147.1"/>
</dbReference>
<dbReference type="SMR" id="B5BHG9"/>
<dbReference type="KEGG" id="sek:SSPA3151"/>
<dbReference type="HOGENOM" id="CLU_094569_0_0_6"/>
<dbReference type="Proteomes" id="UP000001869">
    <property type="component" value="Chromosome"/>
</dbReference>
<dbReference type="GO" id="GO:0051539">
    <property type="term" value="F:4 iron, 4 sulfur cluster binding"/>
    <property type="evidence" value="ECO:0007669"/>
    <property type="project" value="UniProtKB-UniRule"/>
</dbReference>
<dbReference type="GO" id="GO:0005506">
    <property type="term" value="F:iron ion binding"/>
    <property type="evidence" value="ECO:0007669"/>
    <property type="project" value="InterPro"/>
</dbReference>
<dbReference type="GO" id="GO:0016226">
    <property type="term" value="P:iron-sulfur cluster assembly"/>
    <property type="evidence" value="ECO:0007669"/>
    <property type="project" value="UniProtKB-UniRule"/>
</dbReference>
<dbReference type="GO" id="GO:0051604">
    <property type="term" value="P:protein maturation"/>
    <property type="evidence" value="ECO:0007669"/>
    <property type="project" value="UniProtKB-UniRule"/>
</dbReference>
<dbReference type="FunFam" id="2.60.300.12:FF:000004">
    <property type="entry name" value="Fe/S biogenesis protein NfuA"/>
    <property type="match status" value="1"/>
</dbReference>
<dbReference type="FunFam" id="3.30.300.130:FF:000002">
    <property type="entry name" value="Fe/S biogenesis protein NfuA"/>
    <property type="match status" value="1"/>
</dbReference>
<dbReference type="Gene3D" id="3.30.300.130">
    <property type="entry name" value="Fe-S cluster assembly (FSCA)"/>
    <property type="match status" value="1"/>
</dbReference>
<dbReference type="Gene3D" id="2.60.300.12">
    <property type="entry name" value="HesB-like domain"/>
    <property type="match status" value="1"/>
</dbReference>
<dbReference type="HAMAP" id="MF_01637">
    <property type="entry name" value="Fe_S_biogen_NfuA"/>
    <property type="match status" value="1"/>
</dbReference>
<dbReference type="InterPro" id="IPR017726">
    <property type="entry name" value="Fe/S_biogenesis_protein_NfuA"/>
</dbReference>
<dbReference type="InterPro" id="IPR000361">
    <property type="entry name" value="FeS_biogenesis"/>
</dbReference>
<dbReference type="InterPro" id="IPR034904">
    <property type="entry name" value="FSCA_dom_sf"/>
</dbReference>
<dbReference type="InterPro" id="IPR035903">
    <property type="entry name" value="HesB-like_dom_sf"/>
</dbReference>
<dbReference type="InterPro" id="IPR001075">
    <property type="entry name" value="NIF_FeS_clus_asmbl_NifU_C"/>
</dbReference>
<dbReference type="NCBIfam" id="NF008392">
    <property type="entry name" value="PRK11190.1"/>
    <property type="match status" value="1"/>
</dbReference>
<dbReference type="NCBIfam" id="TIGR03341">
    <property type="entry name" value="YhgI_GntY"/>
    <property type="match status" value="1"/>
</dbReference>
<dbReference type="PANTHER" id="PTHR11178:SF51">
    <property type="entry name" value="FE_S BIOGENESIS PROTEIN NFUA"/>
    <property type="match status" value="1"/>
</dbReference>
<dbReference type="PANTHER" id="PTHR11178">
    <property type="entry name" value="IRON-SULFUR CLUSTER SCAFFOLD PROTEIN NFU-RELATED"/>
    <property type="match status" value="1"/>
</dbReference>
<dbReference type="Pfam" id="PF01521">
    <property type="entry name" value="Fe-S_biosyn"/>
    <property type="match status" value="1"/>
</dbReference>
<dbReference type="Pfam" id="PF01106">
    <property type="entry name" value="NifU"/>
    <property type="match status" value="1"/>
</dbReference>
<dbReference type="SUPFAM" id="SSF117916">
    <property type="entry name" value="Fe-S cluster assembly (FSCA) domain-like"/>
    <property type="match status" value="1"/>
</dbReference>
<dbReference type="SUPFAM" id="SSF89360">
    <property type="entry name" value="HesB-like domain"/>
    <property type="match status" value="1"/>
</dbReference>
<evidence type="ECO:0000255" key="1">
    <source>
        <dbReference type="HAMAP-Rule" id="MF_01637"/>
    </source>
</evidence>
<keyword id="KW-0004">4Fe-4S</keyword>
<keyword id="KW-0408">Iron</keyword>
<keyword id="KW-0411">Iron-sulfur</keyword>
<keyword id="KW-0479">Metal-binding</keyword>
<proteinExistence type="inferred from homology"/>
<reference key="1">
    <citation type="journal article" date="2009" name="BMC Genomics">
        <title>Pseudogene accumulation in the evolutionary histories of Salmonella enterica serovars Paratyphi A and Typhi.</title>
        <authorList>
            <person name="Holt K.E."/>
            <person name="Thomson N.R."/>
            <person name="Wain J."/>
            <person name="Langridge G.C."/>
            <person name="Hasan R."/>
            <person name="Bhutta Z.A."/>
            <person name="Quail M.A."/>
            <person name="Norbertczak H."/>
            <person name="Walker D."/>
            <person name="Simmonds M."/>
            <person name="White B."/>
            <person name="Bason N."/>
            <person name="Mungall K."/>
            <person name="Dougan G."/>
            <person name="Parkhill J."/>
        </authorList>
    </citation>
    <scope>NUCLEOTIDE SEQUENCE [LARGE SCALE GENOMIC DNA]</scope>
    <source>
        <strain>AKU_12601</strain>
    </source>
</reference>
<accession>B5BHG9</accession>
<sequence length="191" mass="20908">MIRISDAAQAHFAKLLANQEEGTQIRVFVINPGAPNAECGVSYCPPDAVEATDTALKFDLLTAYVDELSAPYLEDAEIDFVTDQLGSQLTLKAPNAKMRKVADDAPLMERVEYALQSQINPQLAGHGGRVSLMEITDEGYAILQFGGGCNGCSMVDVTLKEGIEKQLLNEFPELKGVRDLTEHQRGEHSYY</sequence>
<name>NFUA_SALPK</name>
<organism>
    <name type="scientific">Salmonella paratyphi A (strain AKU_12601)</name>
    <dbReference type="NCBI Taxonomy" id="554290"/>
    <lineage>
        <taxon>Bacteria</taxon>
        <taxon>Pseudomonadati</taxon>
        <taxon>Pseudomonadota</taxon>
        <taxon>Gammaproteobacteria</taxon>
        <taxon>Enterobacterales</taxon>
        <taxon>Enterobacteriaceae</taxon>
        <taxon>Salmonella</taxon>
    </lineage>
</organism>
<feature type="chain" id="PRO_1000186777" description="Fe/S biogenesis protein NfuA">
    <location>
        <begin position="1"/>
        <end position="191"/>
    </location>
</feature>
<feature type="binding site" evidence="1">
    <location>
        <position position="149"/>
    </location>
    <ligand>
        <name>[4Fe-4S] cluster</name>
        <dbReference type="ChEBI" id="CHEBI:49883"/>
    </ligand>
</feature>
<feature type="binding site" evidence="1">
    <location>
        <position position="152"/>
    </location>
    <ligand>
        <name>[4Fe-4S] cluster</name>
        <dbReference type="ChEBI" id="CHEBI:49883"/>
    </ligand>
</feature>
<gene>
    <name evidence="1" type="primary">nfuA</name>
    <name type="ordered locus">SSPA3151</name>
</gene>
<comment type="function">
    <text evidence="1">Involved in iron-sulfur cluster biogenesis. Binds a 4Fe-4S cluster, can transfer this cluster to apoproteins, and thereby intervenes in the maturation of Fe/S proteins. Could also act as a scaffold/chaperone for damaged Fe/S proteins.</text>
</comment>
<comment type="cofactor">
    <cofactor evidence="1">
        <name>[4Fe-4S] cluster</name>
        <dbReference type="ChEBI" id="CHEBI:49883"/>
    </cofactor>
    <text evidence="1">Binds 1 [4Fe-4S] cluster per subunit. The cluster is presumably bound at the interface of two monomers.</text>
</comment>
<comment type="subunit">
    <text evidence="1">Homodimer.</text>
</comment>
<comment type="similarity">
    <text evidence="1">Belongs to the NfuA family.</text>
</comment>